<feature type="chain" id="PRO_0000288372" description="Proline--tRNA ligase">
    <location>
        <begin position="1"/>
        <end position="559"/>
    </location>
</feature>
<protein>
    <recommendedName>
        <fullName evidence="1">Proline--tRNA ligase</fullName>
        <ecNumber evidence="1">6.1.1.15</ecNumber>
    </recommendedName>
    <alternativeName>
        <fullName evidence="1">Prolyl-tRNA synthetase</fullName>
        <shortName evidence="1">ProRS</shortName>
    </alternativeName>
</protein>
<keyword id="KW-0030">Aminoacyl-tRNA synthetase</keyword>
<keyword id="KW-0067">ATP-binding</keyword>
<keyword id="KW-0963">Cytoplasm</keyword>
<keyword id="KW-0436">Ligase</keyword>
<keyword id="KW-0547">Nucleotide-binding</keyword>
<keyword id="KW-0648">Protein biosynthesis</keyword>
<evidence type="ECO:0000255" key="1">
    <source>
        <dbReference type="HAMAP-Rule" id="MF_01569"/>
    </source>
</evidence>
<proteinExistence type="inferred from homology"/>
<organism>
    <name type="scientific">Ruthia magnifica subsp. Calyptogena magnifica</name>
    <dbReference type="NCBI Taxonomy" id="413404"/>
    <lineage>
        <taxon>Bacteria</taxon>
        <taxon>Pseudomonadati</taxon>
        <taxon>Pseudomonadota</taxon>
        <taxon>Gammaproteobacteria</taxon>
        <taxon>Candidatus Pseudothioglobaceae</taxon>
        <taxon>Candidatus Ruthturnera</taxon>
    </lineage>
</organism>
<name>SYP_RUTMC</name>
<gene>
    <name evidence="1" type="primary">proS</name>
    <name type="ordered locus">Rmag_0348</name>
</gene>
<sequence length="559" mass="63507">MKTTKLLIPTQKEVPNDAQIISHQLMIRAGLISKLASGLYSYLPMGVRVLHKVENIIRQEMNKSGAQEVFMPVVQPAELWKTSGRWDKYGTELLRFTDRHQREFCLGPTHEEVITHLAAQYLRSYKQLPMNFYQIQTKFRDEIRPRFGVMRSREFIMKDAYSFHLDQYSLQQTYDVMYQTYCNIFDRLSLDYHAVLADSGSIGGDASHEFHVLAESGEDTICFSDESNYAANIEKVSFLKQEKTCKSTLTEERVLTKKKNSIEEVAEFLNVNKSDCVKILIIKTKDGFKALALRGDHELNEIKAHNLFGNFEFAIDDEIKNLDLKKGFIGIKDLDIDLIVDYSASVLCDFVCGANEWDYHLMSVNWQGIEFVDADLRSAVEGDYSPDGKGKLIIKRGIEVGHIFQLGTKYSSAMKVNVIGESGKAITTTMGCYGIGVTRIIAASIEQNYDDKGIIFPQAIAPFQVVIVPINYNKSTRVKALSDKLYQQFIGAGIEVLLDDRKERAGIMFADSELLGIPHRMVISDTHADNGNVEYKARDKIDKMQMKFDDALSFIQFKL</sequence>
<comment type="function">
    <text evidence="1">Catalyzes the attachment of proline to tRNA(Pro) in a two-step reaction: proline is first activated by ATP to form Pro-AMP and then transferred to the acceptor end of tRNA(Pro). As ProRS can inadvertently accommodate and process non-cognate amino acids such as alanine and cysteine, to avoid such errors it has two additional distinct editing activities against alanine. One activity is designated as 'pretransfer' editing and involves the tRNA(Pro)-independent hydrolysis of activated Ala-AMP. The other activity is designated 'posttransfer' editing and involves deacylation of mischarged Ala-tRNA(Pro). The misacylated Cys-tRNA(Pro) is not edited by ProRS.</text>
</comment>
<comment type="catalytic activity">
    <reaction evidence="1">
        <text>tRNA(Pro) + L-proline + ATP = L-prolyl-tRNA(Pro) + AMP + diphosphate</text>
        <dbReference type="Rhea" id="RHEA:14305"/>
        <dbReference type="Rhea" id="RHEA-COMP:9700"/>
        <dbReference type="Rhea" id="RHEA-COMP:9702"/>
        <dbReference type="ChEBI" id="CHEBI:30616"/>
        <dbReference type="ChEBI" id="CHEBI:33019"/>
        <dbReference type="ChEBI" id="CHEBI:60039"/>
        <dbReference type="ChEBI" id="CHEBI:78442"/>
        <dbReference type="ChEBI" id="CHEBI:78532"/>
        <dbReference type="ChEBI" id="CHEBI:456215"/>
        <dbReference type="EC" id="6.1.1.15"/>
    </reaction>
</comment>
<comment type="subunit">
    <text evidence="1">Homodimer.</text>
</comment>
<comment type="subcellular location">
    <subcellularLocation>
        <location evidence="1">Cytoplasm</location>
    </subcellularLocation>
</comment>
<comment type="domain">
    <text evidence="1">Consists of three domains: the N-terminal catalytic domain, the editing domain and the C-terminal anticodon-binding domain.</text>
</comment>
<comment type="similarity">
    <text evidence="1">Belongs to the class-II aminoacyl-tRNA synthetase family. ProS type 1 subfamily.</text>
</comment>
<accession>A1AW17</accession>
<dbReference type="EC" id="6.1.1.15" evidence="1"/>
<dbReference type="EMBL" id="CP000488">
    <property type="protein sequence ID" value="ABL02124.1"/>
    <property type="molecule type" value="Genomic_DNA"/>
</dbReference>
<dbReference type="RefSeq" id="WP_011737749.1">
    <property type="nucleotide sequence ID" value="NC_008610.1"/>
</dbReference>
<dbReference type="SMR" id="A1AW17"/>
<dbReference type="STRING" id="413404.Rmag_0348"/>
<dbReference type="KEGG" id="rma:Rmag_0348"/>
<dbReference type="eggNOG" id="COG0442">
    <property type="taxonomic scope" value="Bacteria"/>
</dbReference>
<dbReference type="HOGENOM" id="CLU_016739_0_0_6"/>
<dbReference type="OrthoDB" id="9809052at2"/>
<dbReference type="Proteomes" id="UP000002587">
    <property type="component" value="Chromosome"/>
</dbReference>
<dbReference type="GO" id="GO:0005829">
    <property type="term" value="C:cytosol"/>
    <property type="evidence" value="ECO:0007669"/>
    <property type="project" value="TreeGrafter"/>
</dbReference>
<dbReference type="GO" id="GO:0002161">
    <property type="term" value="F:aminoacyl-tRNA deacylase activity"/>
    <property type="evidence" value="ECO:0007669"/>
    <property type="project" value="InterPro"/>
</dbReference>
<dbReference type="GO" id="GO:0005524">
    <property type="term" value="F:ATP binding"/>
    <property type="evidence" value="ECO:0007669"/>
    <property type="project" value="UniProtKB-UniRule"/>
</dbReference>
<dbReference type="GO" id="GO:0004827">
    <property type="term" value="F:proline-tRNA ligase activity"/>
    <property type="evidence" value="ECO:0007669"/>
    <property type="project" value="UniProtKB-UniRule"/>
</dbReference>
<dbReference type="GO" id="GO:0006433">
    <property type="term" value="P:prolyl-tRNA aminoacylation"/>
    <property type="evidence" value="ECO:0007669"/>
    <property type="project" value="UniProtKB-UniRule"/>
</dbReference>
<dbReference type="CDD" id="cd04334">
    <property type="entry name" value="ProRS-INS"/>
    <property type="match status" value="1"/>
</dbReference>
<dbReference type="CDD" id="cd00861">
    <property type="entry name" value="ProRS_anticodon_short"/>
    <property type="match status" value="1"/>
</dbReference>
<dbReference type="CDD" id="cd00779">
    <property type="entry name" value="ProRS_core_prok"/>
    <property type="match status" value="1"/>
</dbReference>
<dbReference type="FunFam" id="3.30.930.10:FF:000012">
    <property type="entry name" value="Proline--tRNA ligase"/>
    <property type="match status" value="1"/>
</dbReference>
<dbReference type="Gene3D" id="3.40.50.800">
    <property type="entry name" value="Anticodon-binding domain"/>
    <property type="match status" value="1"/>
</dbReference>
<dbReference type="Gene3D" id="3.30.930.10">
    <property type="entry name" value="Bira Bifunctional Protein, Domain 2"/>
    <property type="match status" value="2"/>
</dbReference>
<dbReference type="HAMAP" id="MF_01569">
    <property type="entry name" value="Pro_tRNA_synth_type1"/>
    <property type="match status" value="1"/>
</dbReference>
<dbReference type="InterPro" id="IPR002314">
    <property type="entry name" value="aa-tRNA-synt_IIb"/>
</dbReference>
<dbReference type="InterPro" id="IPR006195">
    <property type="entry name" value="aa-tRNA-synth_II"/>
</dbReference>
<dbReference type="InterPro" id="IPR045864">
    <property type="entry name" value="aa-tRNA-synth_II/BPL/LPL"/>
</dbReference>
<dbReference type="InterPro" id="IPR004154">
    <property type="entry name" value="Anticodon-bd"/>
</dbReference>
<dbReference type="InterPro" id="IPR036621">
    <property type="entry name" value="Anticodon-bd_dom_sf"/>
</dbReference>
<dbReference type="InterPro" id="IPR002316">
    <property type="entry name" value="Pro-tRNA-ligase_IIa"/>
</dbReference>
<dbReference type="InterPro" id="IPR004500">
    <property type="entry name" value="Pro-tRNA-synth_IIa_bac-type"/>
</dbReference>
<dbReference type="InterPro" id="IPR023717">
    <property type="entry name" value="Pro-tRNA-Synthase_IIa_type1"/>
</dbReference>
<dbReference type="InterPro" id="IPR050062">
    <property type="entry name" value="Pro-tRNA_synthetase"/>
</dbReference>
<dbReference type="InterPro" id="IPR044140">
    <property type="entry name" value="ProRS_anticodon_short"/>
</dbReference>
<dbReference type="InterPro" id="IPR033730">
    <property type="entry name" value="ProRS_core_prok"/>
</dbReference>
<dbReference type="InterPro" id="IPR036754">
    <property type="entry name" value="YbaK/aa-tRNA-synt-asso_dom_sf"/>
</dbReference>
<dbReference type="InterPro" id="IPR007214">
    <property type="entry name" value="YbaK/aa-tRNA-synth-assoc-dom"/>
</dbReference>
<dbReference type="NCBIfam" id="NF006625">
    <property type="entry name" value="PRK09194.1"/>
    <property type="match status" value="1"/>
</dbReference>
<dbReference type="NCBIfam" id="TIGR00409">
    <property type="entry name" value="proS_fam_II"/>
    <property type="match status" value="1"/>
</dbReference>
<dbReference type="PANTHER" id="PTHR42753">
    <property type="entry name" value="MITOCHONDRIAL RIBOSOME PROTEIN L39/PROLYL-TRNA LIGASE FAMILY MEMBER"/>
    <property type="match status" value="1"/>
</dbReference>
<dbReference type="PANTHER" id="PTHR42753:SF2">
    <property type="entry name" value="PROLINE--TRNA LIGASE"/>
    <property type="match status" value="1"/>
</dbReference>
<dbReference type="Pfam" id="PF03129">
    <property type="entry name" value="HGTP_anticodon"/>
    <property type="match status" value="1"/>
</dbReference>
<dbReference type="Pfam" id="PF00587">
    <property type="entry name" value="tRNA-synt_2b"/>
    <property type="match status" value="1"/>
</dbReference>
<dbReference type="Pfam" id="PF04073">
    <property type="entry name" value="tRNA_edit"/>
    <property type="match status" value="1"/>
</dbReference>
<dbReference type="PRINTS" id="PR01046">
    <property type="entry name" value="TRNASYNTHPRO"/>
</dbReference>
<dbReference type="SUPFAM" id="SSF52954">
    <property type="entry name" value="Class II aaRS ABD-related"/>
    <property type="match status" value="1"/>
</dbReference>
<dbReference type="SUPFAM" id="SSF55681">
    <property type="entry name" value="Class II aaRS and biotin synthetases"/>
    <property type="match status" value="1"/>
</dbReference>
<dbReference type="SUPFAM" id="SSF55826">
    <property type="entry name" value="YbaK/ProRS associated domain"/>
    <property type="match status" value="1"/>
</dbReference>
<dbReference type="PROSITE" id="PS50862">
    <property type="entry name" value="AA_TRNA_LIGASE_II"/>
    <property type="match status" value="1"/>
</dbReference>
<reference key="1">
    <citation type="journal article" date="2007" name="Science">
        <title>The Calyptogena magnifica chemoautotrophic symbiont genome.</title>
        <authorList>
            <person name="Newton I.L.G."/>
            <person name="Woyke T."/>
            <person name="Auchtung T.A."/>
            <person name="Dilly G.F."/>
            <person name="Dutton R.J."/>
            <person name="Fisher M.C."/>
            <person name="Fontanez K.M."/>
            <person name="Lau E."/>
            <person name="Stewart F.J."/>
            <person name="Richardson P.M."/>
            <person name="Barry K.W."/>
            <person name="Saunders E."/>
            <person name="Detter J.C."/>
            <person name="Wu D."/>
            <person name="Eisen J.A."/>
            <person name="Cavanaugh C.M."/>
        </authorList>
    </citation>
    <scope>NUCLEOTIDE SEQUENCE [LARGE SCALE GENOMIC DNA]</scope>
</reference>